<name>EPMB_SALTY</name>
<protein>
    <recommendedName>
        <fullName>L-lysine 2,3-aminomutase</fullName>
        <shortName>LAM</shortName>
        <ecNumber>5.4.3.-</ecNumber>
    </recommendedName>
    <alternativeName>
        <fullName>EF-P post-translational modification enzyme B</fullName>
    </alternativeName>
</protein>
<organism>
    <name type="scientific">Salmonella typhimurium (strain LT2 / SGSC1412 / ATCC 700720)</name>
    <dbReference type="NCBI Taxonomy" id="99287"/>
    <lineage>
        <taxon>Bacteria</taxon>
        <taxon>Pseudomonadati</taxon>
        <taxon>Pseudomonadota</taxon>
        <taxon>Gammaproteobacteria</taxon>
        <taxon>Enterobacterales</taxon>
        <taxon>Enterobacteriaceae</taxon>
        <taxon>Salmonella</taxon>
    </lineage>
</organism>
<keyword id="KW-0004">4Fe-4S</keyword>
<keyword id="KW-0408">Iron</keyword>
<keyword id="KW-0411">Iron-sulfur</keyword>
<keyword id="KW-0413">Isomerase</keyword>
<keyword id="KW-0479">Metal-binding</keyword>
<keyword id="KW-0663">Pyridoxal phosphate</keyword>
<keyword id="KW-1185">Reference proteome</keyword>
<keyword id="KW-0949">S-adenosyl-L-methionine</keyword>
<feature type="chain" id="PRO_0000419667" description="L-lysine 2,3-aminomutase">
    <location>
        <begin position="1"/>
        <end position="342"/>
    </location>
</feature>
<feature type="domain" description="Radical SAM core" evidence="3">
    <location>
        <begin position="106"/>
        <end position="329"/>
    </location>
</feature>
<feature type="binding site" evidence="2">
    <location>
        <position position="120"/>
    </location>
    <ligand>
        <name>[4Fe-4S] cluster</name>
        <dbReference type="ChEBI" id="CHEBI:49883"/>
        <note>4Fe-4S-S-AdoMet</note>
    </ligand>
</feature>
<feature type="binding site" evidence="2">
    <location>
        <position position="124"/>
    </location>
    <ligand>
        <name>[4Fe-4S] cluster</name>
        <dbReference type="ChEBI" id="CHEBI:49883"/>
        <note>4Fe-4S-S-AdoMet</note>
    </ligand>
</feature>
<feature type="binding site" evidence="2">
    <location>
        <position position="127"/>
    </location>
    <ligand>
        <name>[4Fe-4S] cluster</name>
        <dbReference type="ChEBI" id="CHEBI:49883"/>
        <note>4Fe-4S-S-AdoMet</note>
    </ligand>
</feature>
<feature type="modified residue" description="N6-(pyridoxal phosphate)lysine" evidence="1">
    <location>
        <position position="332"/>
    </location>
</feature>
<gene>
    <name type="primary">epmB</name>
    <name type="synonym">yjeK</name>
    <name type="ordered locus">STM4333</name>
</gene>
<evidence type="ECO:0000250" key="1"/>
<evidence type="ECO:0000255" key="2"/>
<evidence type="ECO:0000255" key="3">
    <source>
        <dbReference type="PROSITE-ProRule" id="PRU01266"/>
    </source>
</evidence>
<evidence type="ECO:0000269" key="4">
    <source>
    </source>
</evidence>
<evidence type="ECO:0000305" key="5"/>
<sequence>MAHIVTLNTPLREDWLAQLADVVTNPDELLHLLQIEADENLRAGQDARRLFALRVPRAFIARMEKGNPDDPLLRQVLTSRDEFIVAPGFSTDPLEEQHSVVPGLLHKYQNRALLLVKGGCAVNCRYCFRRHFPYAENQGNKRNWTVALEYIAAHPELDEIIFSGGDPLMAKDHELDWLLTQLEAIKHVKRLRIHSRLPIVIPARITDELVARFDQSRLQILLVNHINHANEVDEAFGLAMKKLRHVGVTLLNQSVLLRGVNDNARTLANLSNALFDAGVMPYYLHVLDKVQGAAHFMVTDDEARQIMRELLTLVSGYMVPRLAREIGGEPSKTPLDLQLRQC</sequence>
<dbReference type="EC" id="5.4.3.-"/>
<dbReference type="EMBL" id="AE006468">
    <property type="protein sequence ID" value="AAL23156.1"/>
    <property type="molecule type" value="Genomic_DNA"/>
</dbReference>
<dbReference type="RefSeq" id="NP_463197.1">
    <property type="nucleotide sequence ID" value="NC_003197.2"/>
</dbReference>
<dbReference type="RefSeq" id="WP_000940484.1">
    <property type="nucleotide sequence ID" value="NC_003197.2"/>
</dbReference>
<dbReference type="SMR" id="Q8ZKB8"/>
<dbReference type="STRING" id="99287.STM4333"/>
<dbReference type="PaxDb" id="99287-STM4333"/>
<dbReference type="GeneID" id="1255859"/>
<dbReference type="KEGG" id="stm:STM4333"/>
<dbReference type="PATRIC" id="fig|99287.12.peg.4559"/>
<dbReference type="HOGENOM" id="CLU_032161_2_0_6"/>
<dbReference type="OMA" id="CAIHCRY"/>
<dbReference type="PhylomeDB" id="Q8ZKB8"/>
<dbReference type="BioCyc" id="SENT99287:STM4333-MONOMER"/>
<dbReference type="Proteomes" id="UP000001014">
    <property type="component" value="Chromosome"/>
</dbReference>
<dbReference type="GO" id="GO:0051539">
    <property type="term" value="F:4 iron, 4 sulfur cluster binding"/>
    <property type="evidence" value="ECO:0000318"/>
    <property type="project" value="GO_Central"/>
</dbReference>
<dbReference type="GO" id="GO:0016869">
    <property type="term" value="F:intramolecular aminotransferase activity"/>
    <property type="evidence" value="ECO:0000318"/>
    <property type="project" value="GO_Central"/>
</dbReference>
<dbReference type="GO" id="GO:0046872">
    <property type="term" value="F:metal ion binding"/>
    <property type="evidence" value="ECO:0007669"/>
    <property type="project" value="UniProtKB-KW"/>
</dbReference>
<dbReference type="CDD" id="cd01335">
    <property type="entry name" value="Radical_SAM"/>
    <property type="match status" value="1"/>
</dbReference>
<dbReference type="FunFam" id="3.20.20.70:FF:000143">
    <property type="entry name" value="EF-P beta-lysylation protein EpmB"/>
    <property type="match status" value="1"/>
</dbReference>
<dbReference type="Gene3D" id="3.20.20.70">
    <property type="entry name" value="Aldolase class I"/>
    <property type="match status" value="1"/>
</dbReference>
<dbReference type="InterPro" id="IPR013785">
    <property type="entry name" value="Aldolase_TIM"/>
</dbReference>
<dbReference type="InterPro" id="IPR022462">
    <property type="entry name" value="EpmB"/>
</dbReference>
<dbReference type="InterPro" id="IPR003739">
    <property type="entry name" value="Lys_aminomutase/Glu_NH3_mut"/>
</dbReference>
<dbReference type="InterPro" id="IPR007197">
    <property type="entry name" value="rSAM"/>
</dbReference>
<dbReference type="NCBIfam" id="TIGR03821">
    <property type="entry name" value="EFP_modif_epmB"/>
    <property type="match status" value="1"/>
</dbReference>
<dbReference type="NCBIfam" id="TIGR00238">
    <property type="entry name" value="KamA family radical SAM protein"/>
    <property type="match status" value="1"/>
</dbReference>
<dbReference type="PANTHER" id="PTHR30538:SF1">
    <property type="entry name" value="L-LYSINE 2,3-AMINOMUTASE"/>
    <property type="match status" value="1"/>
</dbReference>
<dbReference type="PANTHER" id="PTHR30538">
    <property type="entry name" value="LYSINE 2,3-AMINOMUTASE-RELATED"/>
    <property type="match status" value="1"/>
</dbReference>
<dbReference type="Pfam" id="PF13353">
    <property type="entry name" value="Fer4_12"/>
    <property type="match status" value="1"/>
</dbReference>
<dbReference type="Pfam" id="PF04055">
    <property type="entry name" value="Radical_SAM"/>
    <property type="match status" value="1"/>
</dbReference>
<dbReference type="PIRSF" id="PIRSF004911">
    <property type="entry name" value="DUF160"/>
    <property type="match status" value="1"/>
</dbReference>
<dbReference type="SFLD" id="SFLDF00314">
    <property type="entry name" value="L-lysine_2_3-aminomutase_(yjeK"/>
    <property type="match status" value="1"/>
</dbReference>
<dbReference type="SFLD" id="SFLDS00029">
    <property type="entry name" value="Radical_SAM"/>
    <property type="match status" value="1"/>
</dbReference>
<dbReference type="SUPFAM" id="SSF102114">
    <property type="entry name" value="Radical SAM enzymes"/>
    <property type="match status" value="1"/>
</dbReference>
<dbReference type="PROSITE" id="PS51918">
    <property type="entry name" value="RADICAL_SAM"/>
    <property type="match status" value="1"/>
</dbReference>
<accession>Q8ZKB8</accession>
<reference key="1">
    <citation type="journal article" date="2001" name="Nature">
        <title>Complete genome sequence of Salmonella enterica serovar Typhimurium LT2.</title>
        <authorList>
            <person name="McClelland M."/>
            <person name="Sanderson K.E."/>
            <person name="Spieth J."/>
            <person name="Clifton S.W."/>
            <person name="Latreille P."/>
            <person name="Courtney L."/>
            <person name="Porwollik S."/>
            <person name="Ali J."/>
            <person name="Dante M."/>
            <person name="Du F."/>
            <person name="Hou S."/>
            <person name="Layman D."/>
            <person name="Leonard S."/>
            <person name="Nguyen C."/>
            <person name="Scott K."/>
            <person name="Holmes A."/>
            <person name="Grewal N."/>
            <person name="Mulvaney E."/>
            <person name="Ryan E."/>
            <person name="Sun H."/>
            <person name="Florea L."/>
            <person name="Miller W."/>
            <person name="Stoneking T."/>
            <person name="Nhan M."/>
            <person name="Waterston R."/>
            <person name="Wilson R.K."/>
        </authorList>
    </citation>
    <scope>NUCLEOTIDE SEQUENCE [LARGE SCALE GENOMIC DNA]</scope>
    <source>
        <strain>LT2 / SGSC1412 / ATCC 700720</strain>
    </source>
</reference>
<reference key="2">
    <citation type="journal article" date="2010" name="Mol. Cell">
        <title>PoxA, YjeK, and elongation factor P coordinately modulate virulence and drug resistance in Salmonella enterica.</title>
        <authorList>
            <person name="Navarre W.W."/>
            <person name="Zou S.B."/>
            <person name="Roy H."/>
            <person name="Xie J.L."/>
            <person name="Savchenko A."/>
            <person name="Singer A."/>
            <person name="Edvokimova E."/>
            <person name="Prost L.R."/>
            <person name="Kumar R."/>
            <person name="Ibba M."/>
            <person name="Fang F.C."/>
        </authorList>
    </citation>
    <scope>DISRUPTION PHENOTYPE</scope>
    <source>
        <strain>14028s / SGSC 2262</strain>
        <strain>LT2 / SGSC1412 / ATCC 700720</strain>
    </source>
</reference>
<proteinExistence type="inferred from homology"/>
<comment type="function">
    <text evidence="1">With EpmA is involved in the beta-lysylation step of the post-translational modification of translation elongation factor P (EF-P) on 'Lys-34'. EpmB appears to act before EpmA. Displays lysine 2,3-aminomutase activity, producing (R)-beta-lysine from (S)-alpha-lysine (L-lysine) (By similarity).</text>
</comment>
<comment type="catalytic activity">
    <reaction>
        <text>L-lysine = D-beta-lysine</text>
        <dbReference type="Rhea" id="RHEA:44148"/>
        <dbReference type="ChEBI" id="CHEBI:32551"/>
        <dbReference type="ChEBI" id="CHEBI:84138"/>
    </reaction>
</comment>
<comment type="cofactor">
    <cofactor evidence="1">
        <name>[4Fe-4S] cluster</name>
        <dbReference type="ChEBI" id="CHEBI:49883"/>
    </cofactor>
    <text evidence="1">Binds 1 [4Fe-4S] cluster. The cluster is coordinated with 3 cysteines and an exchangeable S-adenosyl-L-methionine.</text>
</comment>
<comment type="cofactor">
    <cofactor evidence="1">
        <name>pyridoxal 5'-phosphate</name>
        <dbReference type="ChEBI" id="CHEBI:597326"/>
    </cofactor>
</comment>
<comment type="disruption phenotype">
    <text evidence="4">Cells lacking this gene are highly attenuated for virulence in mouse models of infection. Salmonella epmA and epmB mutants share extensive phenotypic pleiotropy, including an increased ability to respire under nutrient-limiting conditions, hypersusceptibility to a variety of diverse growth inhibitors, and altered expression of multiple proteins, including several encoded on the SPI-1 pathogenicity island.</text>
</comment>
<comment type="similarity">
    <text evidence="5">Belongs to the radical SAM superfamily. KamA family.</text>
</comment>